<accession>B1AJ41</accession>
<proteinExistence type="inferred from homology"/>
<comment type="function">
    <text evidence="1">Catalyzes the 2-thiolation of uridine at the wobble position (U34) of tRNA, leading to the formation of s(2)U34.</text>
</comment>
<comment type="catalytic activity">
    <reaction evidence="1">
        <text>S-sulfanyl-L-cysteinyl-[protein] + uridine(34) in tRNA + AH2 + ATP = 2-thiouridine(34) in tRNA + L-cysteinyl-[protein] + A + AMP + diphosphate + H(+)</text>
        <dbReference type="Rhea" id="RHEA:47032"/>
        <dbReference type="Rhea" id="RHEA-COMP:10131"/>
        <dbReference type="Rhea" id="RHEA-COMP:11726"/>
        <dbReference type="Rhea" id="RHEA-COMP:11727"/>
        <dbReference type="Rhea" id="RHEA-COMP:11728"/>
        <dbReference type="ChEBI" id="CHEBI:13193"/>
        <dbReference type="ChEBI" id="CHEBI:15378"/>
        <dbReference type="ChEBI" id="CHEBI:17499"/>
        <dbReference type="ChEBI" id="CHEBI:29950"/>
        <dbReference type="ChEBI" id="CHEBI:30616"/>
        <dbReference type="ChEBI" id="CHEBI:33019"/>
        <dbReference type="ChEBI" id="CHEBI:61963"/>
        <dbReference type="ChEBI" id="CHEBI:65315"/>
        <dbReference type="ChEBI" id="CHEBI:87170"/>
        <dbReference type="ChEBI" id="CHEBI:456215"/>
        <dbReference type="EC" id="2.8.1.13"/>
    </reaction>
</comment>
<comment type="subcellular location">
    <subcellularLocation>
        <location evidence="1">Cytoplasm</location>
    </subcellularLocation>
</comment>
<comment type="similarity">
    <text evidence="1">Belongs to the MnmA/TRMU family.</text>
</comment>
<evidence type="ECO:0000255" key="1">
    <source>
        <dbReference type="HAMAP-Rule" id="MF_00144"/>
    </source>
</evidence>
<gene>
    <name evidence="1" type="primary">mnmA</name>
    <name type="synonym">trmU</name>
    <name type="ordered locus">UPA3_0418</name>
</gene>
<dbReference type="EC" id="2.8.1.13" evidence="1"/>
<dbReference type="EMBL" id="CP000942">
    <property type="protein sequence ID" value="ACA33182.1"/>
    <property type="molecule type" value="Genomic_DNA"/>
</dbReference>
<dbReference type="RefSeq" id="WP_006688685.1">
    <property type="nucleotide sequence ID" value="NC_010503.1"/>
</dbReference>
<dbReference type="SMR" id="B1AJ41"/>
<dbReference type="GeneID" id="29672313"/>
<dbReference type="KEGG" id="upa:UPA3_0418"/>
<dbReference type="HOGENOM" id="CLU_035188_1_0_14"/>
<dbReference type="Proteomes" id="UP000002162">
    <property type="component" value="Chromosome"/>
</dbReference>
<dbReference type="GO" id="GO:0005737">
    <property type="term" value="C:cytoplasm"/>
    <property type="evidence" value="ECO:0007669"/>
    <property type="project" value="UniProtKB-SubCell"/>
</dbReference>
<dbReference type="GO" id="GO:0005524">
    <property type="term" value="F:ATP binding"/>
    <property type="evidence" value="ECO:0007669"/>
    <property type="project" value="UniProtKB-KW"/>
</dbReference>
<dbReference type="GO" id="GO:0000049">
    <property type="term" value="F:tRNA binding"/>
    <property type="evidence" value="ECO:0007669"/>
    <property type="project" value="UniProtKB-KW"/>
</dbReference>
<dbReference type="GO" id="GO:0103016">
    <property type="term" value="F:tRNA-uridine 2-sulfurtransferase activity"/>
    <property type="evidence" value="ECO:0007669"/>
    <property type="project" value="UniProtKB-EC"/>
</dbReference>
<dbReference type="GO" id="GO:0002143">
    <property type="term" value="P:tRNA wobble position uridine thiolation"/>
    <property type="evidence" value="ECO:0007669"/>
    <property type="project" value="TreeGrafter"/>
</dbReference>
<dbReference type="CDD" id="cd01998">
    <property type="entry name" value="MnmA_TRMU-like"/>
    <property type="match status" value="1"/>
</dbReference>
<dbReference type="FunFam" id="2.30.30.280:FF:000001">
    <property type="entry name" value="tRNA-specific 2-thiouridylase MnmA"/>
    <property type="match status" value="1"/>
</dbReference>
<dbReference type="FunFam" id="3.40.50.620:FF:000004">
    <property type="entry name" value="tRNA-specific 2-thiouridylase MnmA"/>
    <property type="match status" value="1"/>
</dbReference>
<dbReference type="Gene3D" id="2.30.30.280">
    <property type="entry name" value="Adenine nucleotide alpha hydrolases-like domains"/>
    <property type="match status" value="1"/>
</dbReference>
<dbReference type="Gene3D" id="3.40.50.620">
    <property type="entry name" value="HUPs"/>
    <property type="match status" value="1"/>
</dbReference>
<dbReference type="Gene3D" id="2.40.30.10">
    <property type="entry name" value="Translation factors"/>
    <property type="match status" value="1"/>
</dbReference>
<dbReference type="HAMAP" id="MF_00144">
    <property type="entry name" value="tRNA_thiouridyl_MnmA"/>
    <property type="match status" value="1"/>
</dbReference>
<dbReference type="InterPro" id="IPR004506">
    <property type="entry name" value="MnmA-like"/>
</dbReference>
<dbReference type="InterPro" id="IPR046885">
    <property type="entry name" value="MnmA-like_C"/>
</dbReference>
<dbReference type="InterPro" id="IPR046884">
    <property type="entry name" value="MnmA-like_central"/>
</dbReference>
<dbReference type="InterPro" id="IPR023382">
    <property type="entry name" value="MnmA-like_central_sf"/>
</dbReference>
<dbReference type="InterPro" id="IPR014729">
    <property type="entry name" value="Rossmann-like_a/b/a_fold"/>
</dbReference>
<dbReference type="NCBIfam" id="NF001138">
    <property type="entry name" value="PRK00143.1"/>
    <property type="match status" value="1"/>
</dbReference>
<dbReference type="NCBIfam" id="TIGR00420">
    <property type="entry name" value="trmU"/>
    <property type="match status" value="1"/>
</dbReference>
<dbReference type="PANTHER" id="PTHR11933:SF5">
    <property type="entry name" value="MITOCHONDRIAL TRNA-SPECIFIC 2-THIOURIDYLASE 1"/>
    <property type="match status" value="1"/>
</dbReference>
<dbReference type="PANTHER" id="PTHR11933">
    <property type="entry name" value="TRNA 5-METHYLAMINOMETHYL-2-THIOURIDYLATE -METHYLTRANSFERASE"/>
    <property type="match status" value="1"/>
</dbReference>
<dbReference type="Pfam" id="PF03054">
    <property type="entry name" value="tRNA_Me_trans"/>
    <property type="match status" value="1"/>
</dbReference>
<dbReference type="Pfam" id="PF20258">
    <property type="entry name" value="tRNA_Me_trans_C"/>
    <property type="match status" value="1"/>
</dbReference>
<dbReference type="Pfam" id="PF20259">
    <property type="entry name" value="tRNA_Me_trans_M"/>
    <property type="match status" value="1"/>
</dbReference>
<dbReference type="SUPFAM" id="SSF52402">
    <property type="entry name" value="Adenine nucleotide alpha hydrolases-like"/>
    <property type="match status" value="1"/>
</dbReference>
<keyword id="KW-0067">ATP-binding</keyword>
<keyword id="KW-0963">Cytoplasm</keyword>
<keyword id="KW-1015">Disulfide bond</keyword>
<keyword id="KW-0547">Nucleotide-binding</keyword>
<keyword id="KW-0694">RNA-binding</keyword>
<keyword id="KW-0808">Transferase</keyword>
<keyword id="KW-0819">tRNA processing</keyword>
<keyword id="KW-0820">tRNA-binding</keyword>
<sequence>MEVKVKKRVVVGLSGGVDSSVSALLLKQEGYEVIGLFMSNWDTIANFENNHEFNKTHQGCESELDYQDAQAVAQKIGIPLYRVEFIKEYWDNVFEYFLSEYQKNRTPNPDILCNQFIKFDSFLNYAKNELQADYIAMGHYARVKHDRNSSFLLKAIDTNKDQTYFLCNLNQNQLQNVLFPIGHLTKLQVRAIAKKHGLITANKKDSTGICFIGERNFKTFLQNYIPNQPGQIINIVNNQIIGHHIGTMYYTIGQRKGLNLGGMNERMFVCDKDIDKKIIYVAPSSFEKQYLISTQALIENINFIEPYNPQIPIMVRFRHRQDLIIVNDFLPIKNTKNVLINYESARAITPGQYAVFYQNDHCIGGGIVSKTNIGHQKVDFLVYKS</sequence>
<reference key="1">
    <citation type="submission" date="2008-02" db="EMBL/GenBank/DDBJ databases">
        <title>Genome sequence of Ureaplasma parvum serovar 3.</title>
        <authorList>
            <person name="Methe B.A."/>
            <person name="Glass J."/>
            <person name="Waites K."/>
            <person name="Shrivastava S."/>
        </authorList>
    </citation>
    <scope>NUCLEOTIDE SEQUENCE [LARGE SCALE GENOMIC DNA]</scope>
    <source>
        <strain>ATCC 27815 / 27 / NCTC 11736</strain>
    </source>
</reference>
<feature type="chain" id="PRO_1000076576" description="tRNA-specific 2-thiouridylase MnmA">
    <location>
        <begin position="1"/>
        <end position="385"/>
    </location>
</feature>
<feature type="region of interest" description="Interaction with target base in tRNA" evidence="1">
    <location>
        <begin position="108"/>
        <end position="110"/>
    </location>
</feature>
<feature type="region of interest" description="Interaction with tRNA" evidence="1">
    <location>
        <begin position="160"/>
        <end position="162"/>
    </location>
</feature>
<feature type="active site" description="Nucleophile" evidence="1">
    <location>
        <position position="113"/>
    </location>
</feature>
<feature type="active site" description="Cysteine persulfide intermediate" evidence="1">
    <location>
        <position position="210"/>
    </location>
</feature>
<feature type="binding site" evidence="1">
    <location>
        <begin position="12"/>
        <end position="19"/>
    </location>
    <ligand>
        <name>ATP</name>
        <dbReference type="ChEBI" id="CHEBI:30616"/>
    </ligand>
</feature>
<feature type="binding site" evidence="1">
    <location>
        <position position="38"/>
    </location>
    <ligand>
        <name>ATP</name>
        <dbReference type="ChEBI" id="CHEBI:30616"/>
    </ligand>
</feature>
<feature type="binding site" evidence="1">
    <location>
        <position position="138"/>
    </location>
    <ligand>
        <name>ATP</name>
        <dbReference type="ChEBI" id="CHEBI:30616"/>
    </ligand>
</feature>
<feature type="site" description="Interaction with tRNA" evidence="1">
    <location>
        <position position="139"/>
    </location>
</feature>
<feature type="site" description="Interaction with tRNA" evidence="1">
    <location>
        <position position="352"/>
    </location>
</feature>
<feature type="disulfide bond" description="Alternate" evidence="1">
    <location>
        <begin position="113"/>
        <end position="210"/>
    </location>
</feature>
<protein>
    <recommendedName>
        <fullName evidence="1">tRNA-specific 2-thiouridylase MnmA</fullName>
        <ecNumber evidence="1">2.8.1.13</ecNumber>
    </recommendedName>
</protein>
<organism>
    <name type="scientific">Ureaplasma parvum serovar 3 (strain ATCC 27815 / 27 / NCTC 11736)</name>
    <dbReference type="NCBI Taxonomy" id="505682"/>
    <lineage>
        <taxon>Bacteria</taxon>
        <taxon>Bacillati</taxon>
        <taxon>Mycoplasmatota</taxon>
        <taxon>Mycoplasmoidales</taxon>
        <taxon>Mycoplasmoidaceae</taxon>
        <taxon>Ureaplasma</taxon>
    </lineage>
</organism>
<name>MNMA_UREP2</name>